<proteinExistence type="inferred from homology"/>
<dbReference type="EMBL" id="CR926482">
    <property type="protein sequence ID" value="CAI30274.1"/>
    <property type="molecule type" value="Transcribed_RNA"/>
</dbReference>
<dbReference type="SMR" id="Q5NVA3"/>
<dbReference type="STRING" id="9601.ENSPPYP00000007674"/>
<dbReference type="GlyCosmos" id="Q5NVA3">
    <property type="glycosylation" value="1 site, No reported glycans"/>
</dbReference>
<dbReference type="eggNOG" id="KOG3796">
    <property type="taxonomic scope" value="Eukaryota"/>
</dbReference>
<dbReference type="InParanoid" id="Q5NVA3"/>
<dbReference type="Proteomes" id="UP000001595">
    <property type="component" value="Unplaced"/>
</dbReference>
<dbReference type="GO" id="GO:0016324">
    <property type="term" value="C:apical plasma membrane"/>
    <property type="evidence" value="ECO:0000250"/>
    <property type="project" value="UniProtKB"/>
</dbReference>
<dbReference type="GO" id="GO:0016323">
    <property type="term" value="C:basolateral plasma membrane"/>
    <property type="evidence" value="ECO:0000250"/>
    <property type="project" value="UniProtKB"/>
</dbReference>
<dbReference type="GO" id="GO:0031410">
    <property type="term" value="C:cytoplasmic vesicle"/>
    <property type="evidence" value="ECO:0000250"/>
    <property type="project" value="UniProtKB"/>
</dbReference>
<dbReference type="GO" id="GO:0005886">
    <property type="term" value="C:plasma membrane"/>
    <property type="evidence" value="ECO:0000250"/>
    <property type="project" value="UniProtKB"/>
</dbReference>
<dbReference type="GO" id="GO:0008519">
    <property type="term" value="F:ammonium channel activity"/>
    <property type="evidence" value="ECO:0000250"/>
    <property type="project" value="UniProtKB"/>
</dbReference>
<dbReference type="GO" id="GO:0030506">
    <property type="term" value="F:ankyrin binding"/>
    <property type="evidence" value="ECO:0000250"/>
    <property type="project" value="UniProtKB"/>
</dbReference>
<dbReference type="GO" id="GO:0035379">
    <property type="term" value="F:carbon dioxide transmembrane transporter activity"/>
    <property type="evidence" value="ECO:0000250"/>
    <property type="project" value="UniProtKB"/>
</dbReference>
<dbReference type="GO" id="GO:0097272">
    <property type="term" value="P:ammonium homeostasis"/>
    <property type="evidence" value="ECO:0007669"/>
    <property type="project" value="TreeGrafter"/>
</dbReference>
<dbReference type="GO" id="GO:0072488">
    <property type="term" value="P:ammonium transmembrane transport"/>
    <property type="evidence" value="ECO:0000250"/>
    <property type="project" value="UniProtKB"/>
</dbReference>
<dbReference type="GO" id="GO:0006873">
    <property type="term" value="P:intracellular monoatomic ion homeostasis"/>
    <property type="evidence" value="ECO:0000250"/>
    <property type="project" value="UniProtKB"/>
</dbReference>
<dbReference type="GO" id="GO:0070634">
    <property type="term" value="P:transepithelial ammonium transport"/>
    <property type="evidence" value="ECO:0000250"/>
    <property type="project" value="UniProtKB"/>
</dbReference>
<dbReference type="FunFam" id="1.10.3430.10:FF:000001">
    <property type="entry name" value="Ammonium transporter Rh type C"/>
    <property type="match status" value="1"/>
</dbReference>
<dbReference type="Gene3D" id="1.10.3430.10">
    <property type="entry name" value="Ammonium transporter AmtB like domains"/>
    <property type="match status" value="1"/>
</dbReference>
<dbReference type="InterPro" id="IPR029020">
    <property type="entry name" value="Ammonium/urea_transptr"/>
</dbReference>
<dbReference type="InterPro" id="IPR024041">
    <property type="entry name" value="NH4_transpt_AmtB-like_dom"/>
</dbReference>
<dbReference type="InterPro" id="IPR002229">
    <property type="entry name" value="RhesusRHD"/>
</dbReference>
<dbReference type="PANTHER" id="PTHR11730">
    <property type="entry name" value="AMMONIUM TRANSPORTER"/>
    <property type="match status" value="1"/>
</dbReference>
<dbReference type="PANTHER" id="PTHR11730:SF30">
    <property type="entry name" value="AMMONIUM TRANSPORTER RH TYPE C"/>
    <property type="match status" value="1"/>
</dbReference>
<dbReference type="Pfam" id="PF00909">
    <property type="entry name" value="Ammonium_transp"/>
    <property type="match status" value="1"/>
</dbReference>
<dbReference type="PRINTS" id="PR00342">
    <property type="entry name" value="RHESUSRHD"/>
</dbReference>
<dbReference type="SUPFAM" id="SSF111352">
    <property type="entry name" value="Ammonium transporter"/>
    <property type="match status" value="1"/>
</dbReference>
<comment type="function">
    <text evidence="2">Ammonium transporter involved in the maintenance of acid-base homeostasis. Transports ammonium and its related derivative methylammonium across the plasma membrane of epithelial cells likely contributing to renal transepithelial ammonia transport and ammonia metabolism. Postulated to primarily mediate an electroneutral bidirectional transport of NH3 ammonia species according to a mechanism that implies interaction of an NH4(+) ion with acidic residues of the pore entry followed by dissociation of NH4(+) into NH3 and H(+). As a result NH3 transits through the central pore and is protonated on the extracellular side reforming NH4(+) (By similarity). May act as a CO2 channel providing for renal acid secretion (By similarity).</text>
</comment>
<comment type="catalytic activity">
    <reaction evidence="2">
        <text>NH4(+)(in) = NH4(+)(out)</text>
        <dbReference type="Rhea" id="RHEA:28747"/>
        <dbReference type="ChEBI" id="CHEBI:28938"/>
    </reaction>
    <physiologicalReaction direction="left-to-right" evidence="2">
        <dbReference type="Rhea" id="RHEA:28748"/>
    </physiologicalReaction>
    <physiologicalReaction direction="right-to-left" evidence="2">
        <dbReference type="Rhea" id="RHEA:28749"/>
    </physiologicalReaction>
</comment>
<comment type="catalytic activity">
    <reaction evidence="2">
        <text>methylamine(out) = methylamine(in)</text>
        <dbReference type="Rhea" id="RHEA:74391"/>
        <dbReference type="ChEBI" id="CHEBI:59338"/>
    </reaction>
    <physiologicalReaction direction="left-to-right" evidence="2">
        <dbReference type="Rhea" id="RHEA:74392"/>
    </physiologicalReaction>
</comment>
<comment type="catalytic activity">
    <reaction evidence="2">
        <text>CO2(out) = CO2(in)</text>
        <dbReference type="Rhea" id="RHEA:74891"/>
        <dbReference type="ChEBI" id="CHEBI:16526"/>
    </reaction>
    <physiologicalReaction direction="left-to-right" evidence="2">
        <dbReference type="Rhea" id="RHEA:74892"/>
    </physiologicalReaction>
</comment>
<comment type="subunit">
    <text evidence="2">Homotrimer.</text>
</comment>
<comment type="subcellular location">
    <subcellularLocation>
        <location evidence="2">Cell membrane</location>
        <topology evidence="3">Multi-pass membrane protein</topology>
    </subcellularLocation>
    <subcellularLocation>
        <location evidence="2">Apical cell membrane</location>
        <topology evidence="3">Multi-pass membrane protein</topology>
    </subcellularLocation>
    <text evidence="1">Also detected at the basolateral membrane and in subapical vesicles.</text>
</comment>
<comment type="PTM">
    <text evidence="1">N-glycosylated.</text>
</comment>
<comment type="similarity">
    <text evidence="4">Belongs to the ammonium transporter (TC 2.A.49) family. Rh subfamily.</text>
</comment>
<evidence type="ECO:0000250" key="1"/>
<evidence type="ECO:0000250" key="2">
    <source>
        <dbReference type="UniProtKB" id="Q9UBD6"/>
    </source>
</evidence>
<evidence type="ECO:0000255" key="3"/>
<evidence type="ECO:0000305" key="4"/>
<keyword id="KW-0924">Ammonia transport</keyword>
<keyword id="KW-1003">Cell membrane</keyword>
<keyword id="KW-0325">Glycoprotein</keyword>
<keyword id="KW-0472">Membrane</keyword>
<keyword id="KW-1185">Reference proteome</keyword>
<keyword id="KW-0812">Transmembrane</keyword>
<keyword id="KW-1133">Transmembrane helix</keyword>
<keyword id="KW-0813">Transport</keyword>
<gene>
    <name type="primary">RHCG</name>
</gene>
<organism>
    <name type="scientific">Pongo abelii</name>
    <name type="common">Sumatran orangutan</name>
    <name type="synonym">Pongo pygmaeus abelii</name>
    <dbReference type="NCBI Taxonomy" id="9601"/>
    <lineage>
        <taxon>Eukaryota</taxon>
        <taxon>Metazoa</taxon>
        <taxon>Chordata</taxon>
        <taxon>Craniata</taxon>
        <taxon>Vertebrata</taxon>
        <taxon>Euteleostomi</taxon>
        <taxon>Mammalia</taxon>
        <taxon>Eutheria</taxon>
        <taxon>Euarchontoglires</taxon>
        <taxon>Primates</taxon>
        <taxon>Haplorrhini</taxon>
        <taxon>Catarrhini</taxon>
        <taxon>Hominidae</taxon>
        <taxon>Pongo</taxon>
    </lineage>
</organism>
<name>RHCG_PONAB</name>
<feature type="chain" id="PRO_0000283582" description="Ammonium transporter Rh type C">
    <location>
        <begin position="1"/>
        <end position="472"/>
    </location>
</feature>
<feature type="topological domain" description="Cytoplasmic" evidence="3">
    <location>
        <begin position="1"/>
        <end position="9"/>
    </location>
</feature>
<feature type="transmembrane region" description="Helical" evidence="3">
    <location>
        <begin position="10"/>
        <end position="30"/>
    </location>
</feature>
<feature type="topological domain" description="Extracellular" evidence="3">
    <location>
        <begin position="31"/>
        <end position="51"/>
    </location>
</feature>
<feature type="transmembrane region" description="Helical" evidence="3">
    <location>
        <begin position="52"/>
        <end position="72"/>
    </location>
</feature>
<feature type="topological domain" description="Cytoplasmic" evidence="3">
    <location>
        <begin position="73"/>
        <end position="76"/>
    </location>
</feature>
<feature type="transmembrane region" description="Helical" evidence="3">
    <location>
        <begin position="77"/>
        <end position="97"/>
    </location>
</feature>
<feature type="topological domain" description="Extracellular" evidence="3">
    <location>
        <begin position="98"/>
        <end position="114"/>
    </location>
</feature>
<feature type="transmembrane region" description="Helical" evidence="3">
    <location>
        <begin position="115"/>
        <end position="135"/>
    </location>
</feature>
<feature type="topological domain" description="Cytoplasmic" evidence="3">
    <location>
        <begin position="136"/>
        <end position="139"/>
    </location>
</feature>
<feature type="transmembrane region" description="Helical" evidence="3">
    <location>
        <begin position="140"/>
        <end position="160"/>
    </location>
</feature>
<feature type="topological domain" description="Extracellular" evidence="3">
    <location>
        <begin position="161"/>
        <end position="168"/>
    </location>
</feature>
<feature type="transmembrane region" description="Helical" evidence="3">
    <location>
        <begin position="169"/>
        <end position="191"/>
    </location>
</feature>
<feature type="topological domain" description="Cytoplasmic" evidence="3">
    <location>
        <begin position="192"/>
        <end position="209"/>
    </location>
</feature>
<feature type="transmembrane region" description="Helical" evidence="3">
    <location>
        <begin position="210"/>
        <end position="230"/>
    </location>
</feature>
<feature type="topological domain" description="Extracellular" evidence="3">
    <location>
        <begin position="231"/>
        <end position="241"/>
    </location>
</feature>
<feature type="transmembrane region" description="Helical" evidence="3">
    <location>
        <begin position="242"/>
        <end position="262"/>
    </location>
</feature>
<feature type="topological domain" description="Cytoplasmic" evidence="3">
    <location>
        <begin position="263"/>
        <end position="294"/>
    </location>
</feature>
<feature type="transmembrane region" description="Helical" evidence="3">
    <location>
        <begin position="295"/>
        <end position="315"/>
    </location>
</feature>
<feature type="topological domain" description="Extracellular" evidence="3">
    <location>
        <begin position="316"/>
        <end position="336"/>
    </location>
</feature>
<feature type="transmembrane region" description="Helical" evidence="3">
    <location>
        <begin position="337"/>
        <end position="357"/>
    </location>
</feature>
<feature type="topological domain" description="Cytoplasmic" evidence="3">
    <location>
        <begin position="358"/>
        <end position="388"/>
    </location>
</feature>
<feature type="transmembrane region" description="Helical" evidence="3">
    <location>
        <begin position="389"/>
        <end position="409"/>
    </location>
</feature>
<feature type="topological domain" description="Extracellular" evidence="3">
    <location>
        <begin position="410"/>
        <end position="450"/>
    </location>
</feature>
<feature type="transmembrane region" description="Helical" evidence="3">
    <location>
        <begin position="451"/>
        <end position="471"/>
    </location>
</feature>
<feature type="topological domain" description="Cytoplasmic" evidence="3">
    <location>
        <position position="472"/>
    </location>
</feature>
<feature type="glycosylation site" description="N-linked (GlcNAc...) asparagine" evidence="3">
    <location>
        <position position="435"/>
    </location>
</feature>
<protein>
    <recommendedName>
        <fullName>Ammonium transporter Rh type C</fullName>
    </recommendedName>
    <alternativeName>
        <fullName>Rhesus blood group family type C glycoprotein</fullName>
        <shortName>Rh family type C glycoprotein</shortName>
        <shortName>Rh type C glycoprotein</shortName>
    </alternativeName>
</protein>
<reference key="1">
    <citation type="submission" date="2004-12" db="EMBL/GenBank/DDBJ databases">
        <authorList>
            <consortium name="The German cDNA consortium"/>
        </authorList>
    </citation>
    <scope>NUCLEOTIDE SEQUENCE [LARGE SCALE MRNA]</scope>
    <source>
        <tissue>Kidney</tissue>
    </source>
</reference>
<sequence>MAWNTNLRWRLPLTCLLLEVVMVILFGVFVRYDFDADAHWWSWRTEFYYRYPSFQDVHVMVFVGFGFLMTFLQRYGFSAVGFNFLLAAFGIQWALLMQGWFHFLQGRYIVVGVENLINADFCVASVCVAFGAVLGKVSPIQLLIMTFFQVTLFAVNEFILLNLLKVKDAGGSMTIHTFGAYFGLTVTRILYRRNLEQSKERQNSVYQSDLFAMIGTLFLWMYWPSFNSAISYHGDSQHRAAINTYCSLAACVLTSVAISSALHKKGKLDMVHIQNATPAGGVAVGTAAEMMLMPYGALIVGFVCGIISTLGFVYLTPFLESRLHIQDTCGINNLHGIPGIIGGIVGAVTAASASLEVYGKEGLVHSFDFQGFKRDWTARTQGKFQIYGLLVTLAMALMGGIIVGVGLILRLPFWGQPSDENCFEDAVYWEMPEGNSTVYIPEDPTFKPSGPSVPSVPMVSPLPMASSVPLVP</sequence>
<accession>Q5NVA3</accession>